<name>M1_I57A2</name>
<evidence type="ECO:0000255" key="1">
    <source>
        <dbReference type="HAMAP-Rule" id="MF_04068"/>
    </source>
</evidence>
<organism>
    <name type="scientific">Influenza A virus (strain A/Leningrad/134/17/1957 H2N2)</name>
    <dbReference type="NCBI Taxonomy" id="380984"/>
    <lineage>
        <taxon>Viruses</taxon>
        <taxon>Riboviria</taxon>
        <taxon>Orthornavirae</taxon>
        <taxon>Negarnaviricota</taxon>
        <taxon>Polyploviricotina</taxon>
        <taxon>Insthoviricetes</taxon>
        <taxon>Articulavirales</taxon>
        <taxon>Orthomyxoviridae</taxon>
        <taxon>Alphainfluenzavirus</taxon>
        <taxon>Alphainfluenzavirus influenzae</taxon>
        <taxon>Influenza A virus</taxon>
    </lineage>
</organism>
<protein>
    <recommendedName>
        <fullName evidence="1">Matrix protein 1</fullName>
        <shortName evidence="1">M1</shortName>
    </recommendedName>
</protein>
<reference key="1">
    <citation type="journal article" date="1992" name="Virology">
        <title>Sequence changes in the live attenuated, cold-adapted variants of influenza A/Leningrad/134/57 (H2N2) virus.</title>
        <authorList>
            <person name="Klimov A.I."/>
            <person name="Cox N.J."/>
            <person name="Yotov W.V."/>
            <person name="Rocha E."/>
            <person name="Alexandrova G.I."/>
            <person name="Kendal A.P."/>
        </authorList>
    </citation>
    <scope>NUCLEOTIDE SEQUENCE</scope>
</reference>
<organismHost>
    <name type="scientific">Aves</name>
    <dbReference type="NCBI Taxonomy" id="8782"/>
</organismHost>
<organismHost>
    <name type="scientific">Homo sapiens</name>
    <name type="common">Human</name>
    <dbReference type="NCBI Taxonomy" id="9606"/>
</organismHost>
<feature type="chain" id="PRO_0000078858" description="Matrix protein 1">
    <location>
        <begin position="1"/>
        <end position="252"/>
    </location>
</feature>
<feature type="region of interest" description="Membrane-binding" evidence="1">
    <location>
        <begin position="1"/>
        <end position="164"/>
    </location>
</feature>
<feature type="region of interest" description="RNP-binding" evidence="1">
    <location>
        <begin position="165"/>
        <end position="252"/>
    </location>
</feature>
<feature type="short sequence motif" description="Nuclear localization signal" evidence="1">
    <location>
        <begin position="101"/>
        <end position="105"/>
    </location>
</feature>
<keyword id="KW-0025">Alternative splicing</keyword>
<keyword id="KW-1048">Host nucleus</keyword>
<keyword id="KW-0472">Membrane</keyword>
<keyword id="KW-0694">RNA-binding</keyword>
<keyword id="KW-0468">Viral matrix protein</keyword>
<keyword id="KW-0946">Virion</keyword>
<sequence>MSLLTEVETYVLSIVPSGPLKAEIAQRLEDVFAGKNTDLEALMEWLKTRPILSPLTKGILGFVFTLTVPSERGLQRRRFVQNALNGNGDPNNMDRAVKLYRKLKREITFHGAKEIALSYSAGALASCMGLIYNRMGAVTTEVAFGLVCATCEQIADSQHRSHRQMVITTNPLIRHENRMVLASTTAKAMEQMAGSSEQAAEAMEVASQARQMVQAMRAIGTHPSSSAGLKSDLLENLQAYQKRMGVQMQRFK</sequence>
<accession>P67864</accession>
<accession>P26128</accession>
<proteinExistence type="inferred from homology"/>
<dbReference type="EMBL" id="M81576">
    <property type="protein sequence ID" value="AAA19195.1"/>
    <property type="molecule type" value="Unassigned_RNA"/>
</dbReference>
<dbReference type="SMR" id="P67864"/>
<dbReference type="GO" id="GO:0042025">
    <property type="term" value="C:host cell nucleus"/>
    <property type="evidence" value="ECO:0007669"/>
    <property type="project" value="UniProtKB-SubCell"/>
</dbReference>
<dbReference type="GO" id="GO:0016020">
    <property type="term" value="C:membrane"/>
    <property type="evidence" value="ECO:0007669"/>
    <property type="project" value="UniProtKB-KW"/>
</dbReference>
<dbReference type="GO" id="GO:0055036">
    <property type="term" value="C:virion membrane"/>
    <property type="evidence" value="ECO:0007669"/>
    <property type="project" value="UniProtKB-SubCell"/>
</dbReference>
<dbReference type="GO" id="GO:0003723">
    <property type="term" value="F:RNA binding"/>
    <property type="evidence" value="ECO:0007669"/>
    <property type="project" value="UniProtKB-UniRule"/>
</dbReference>
<dbReference type="GO" id="GO:0039660">
    <property type="term" value="F:structural constituent of virion"/>
    <property type="evidence" value="ECO:0007669"/>
    <property type="project" value="UniProtKB-UniRule"/>
</dbReference>
<dbReference type="GO" id="GO:0046761">
    <property type="term" value="P:viral budding from plasma membrane"/>
    <property type="evidence" value="ECO:0007669"/>
    <property type="project" value="UniProtKB-UniRule"/>
</dbReference>
<dbReference type="FunFam" id="1.10.10.180:FF:000001">
    <property type="entry name" value="Matrix protein 1"/>
    <property type="match status" value="1"/>
</dbReference>
<dbReference type="FunFam" id="1.20.91.10:FF:000001">
    <property type="entry name" value="Matrix protein 1"/>
    <property type="match status" value="1"/>
</dbReference>
<dbReference type="Gene3D" id="1.10.10.180">
    <property type="match status" value="1"/>
</dbReference>
<dbReference type="Gene3D" id="1.20.91.10">
    <property type="match status" value="1"/>
</dbReference>
<dbReference type="HAMAP" id="MF_04068">
    <property type="entry name" value="INFV_M1"/>
    <property type="match status" value="1"/>
</dbReference>
<dbReference type="InterPro" id="IPR036039">
    <property type="entry name" value="Flu_matrix_M1"/>
</dbReference>
<dbReference type="InterPro" id="IPR013188">
    <property type="entry name" value="Flu_matrix_M1_C"/>
</dbReference>
<dbReference type="InterPro" id="IPR001561">
    <property type="entry name" value="Flu_matrix_M1_N"/>
</dbReference>
<dbReference type="InterPro" id="IPR015423">
    <property type="entry name" value="Flu_matrix_M1_N_sub1"/>
</dbReference>
<dbReference type="InterPro" id="IPR015799">
    <property type="entry name" value="Flu_matrix_M1_N_sub2"/>
</dbReference>
<dbReference type="InterPro" id="IPR037533">
    <property type="entry name" value="INFV_M1"/>
</dbReference>
<dbReference type="Pfam" id="PF00598">
    <property type="entry name" value="Flu_M1"/>
    <property type="match status" value="1"/>
</dbReference>
<dbReference type="Pfam" id="PF08289">
    <property type="entry name" value="Flu_M1_C"/>
    <property type="match status" value="1"/>
</dbReference>
<dbReference type="SMART" id="SM00759">
    <property type="entry name" value="Flu_M1_C"/>
    <property type="match status" value="1"/>
</dbReference>
<dbReference type="SUPFAM" id="SSF48145">
    <property type="entry name" value="Influenza virus matrix protein M1"/>
    <property type="match status" value="1"/>
</dbReference>
<gene>
    <name evidence="1" type="primary">M</name>
</gene>
<comment type="function">
    <text evidence="1">Plays critical roles in virus replication, from virus entry and uncoating to assembly and budding of the virus particle. M1 binding to ribonucleocapsids (RNPs) in nucleus seems to inhibit viral transcription. Interaction of viral NEP with M1-RNP is thought to promote nuclear export of the complex, which is targeted to the virion assembly site at the apical plasma membrane in polarized epithelial cells. Interactions with NA and HA may bring M1, a non-raft-associated protein, into lipid rafts. Forms a continuous shell on the inner side of the lipid bilayer in virion, where it binds the RNP. During virus entry into cell, the M2 ion channel acidifies the internal virion core, inducing M1 dissociation from the RNP. M1-free RNPs are transported to the nucleus, where viral transcription and replication can take place.</text>
</comment>
<comment type="function">
    <text evidence="1">Determines the virion's shape: spherical or filamentous. Clinical isolates of influenza are characterized by the presence of significant proportion of filamentous virions, whereas after multiple passage on eggs or cell culture, virions have only spherical morphology. Filamentous virions are thought to be important to infect neighboring cells, and spherical virions more suited to spread through aerosol between hosts organisms.</text>
</comment>
<comment type="subunit">
    <text evidence="1">Homodimer and homomultimer. Interacts with NEP. Binds ribonucleocapsid by both interacting with genomic RNA and NP protein. May interact with HA and NA. Cannot bind NP without genomic RNA.</text>
</comment>
<comment type="subcellular location">
    <subcellularLocation>
        <location evidence="1">Virion membrane</location>
        <topology evidence="1">Peripheral membrane protein</topology>
        <orientation evidence="1">Cytoplasmic side</orientation>
    </subcellularLocation>
    <subcellularLocation>
        <location evidence="1">Host nucleus</location>
    </subcellularLocation>
</comment>
<comment type="alternative products">
    <event type="alternative splicing"/>
    <isoform>
        <id>P67864-1</id>
        <id>P26128-1</id>
        <name>M1</name>
        <sequence type="displayed"/>
    </isoform>
    <isoform>
        <id>P67866-1</id>
        <id>P26130-1</id>
        <name>M2</name>
        <sequence type="external"/>
    </isoform>
    <text>Only the first 9 residues are shared by the 2 isoforms.</text>
</comment>
<comment type="miscellaneous">
    <text evidence="1">Most abundant protein in virion. When expressed alone can form virus-like particles in transfected cells.</text>
</comment>
<comment type="similarity">
    <text evidence="1">Belongs to the influenza viruses Matrix protein M1 family.</text>
</comment>